<comment type="function">
    <text evidence="3 4">May act as a scaffolding protein within caveolar membranes. Forms a stable heterooligomeric complex with CAV2 that targets to lipid rafts and drives caveolae formation. Mediates the recruitment of CAVIN proteins (CAVIN1/2/3/4) to the caveolae (By similarity). Interacts directly with G-protein alpha subunits and can functionally regulate their activity (By similarity). Involved in the costimulatory signal essential for T-cell receptor (TCR)-mediated T-cell activation. Its binding to DPP4 induces T-cell proliferation and NF-kappa-B activation in a T-cell receptor/CD3-dependent manner (By similarity). Recruits CTNNB1 to caveolar membranes and may regulate CTNNB1-mediated signaling through the Wnt pathway (By similarity). Negatively regulates TGFB1-mediated activation of SMAD2/3 by mediating the internalization of TGFBR1 from membrane rafts leading to its subsequent degradation (By similarity). Binds 20(S)-hydroxycholesterol (20(S)-OHC) (By similarity).</text>
</comment>
<comment type="subunit">
    <text evidence="2 3 4 5">Homooligomer. Interacts with GLIPR2. Interacts with NOSTRIN (By similarity). Interacts with SNAP25 and STX1A (By similarity). Interacts (via the N-terminus) with DPP4; the interaction is direct (By similarity). Interacts with CTNNB1, CDH1 and JUP. Interacts with PACSIN2; this interaction induces membrane tubulation (By similarity). Interacts with SLC7A9 (By similarity). Interacts with BMX and BTK. Interacts with TGFBR1. Interacts with CAVIN3 (via leucine-zipper domain) in a cholesterol-sensitive manner. Interacts with CAVIN1. Interacts with EHD2 in a cholesterol-dependent manner. Forms a ternary complex with UBXN6 and VCP; mediates CAV1 targeting to lysosomes for degradation. Interacts with ABCG1; this interaction regulates ABCG1-mediated cholesterol efflux (By similarity). Interacts with NEU3; this interaction enhances NEU3 sialidase activity within caveola. Interacts (via C-terminus) with SPRY1, SPRY2 (via C-terminus), SPRY3, and SPRY4 (By similarity). Interacts with IGFBP5; this interaction allows trafficking of IGFBP5 from the plasma membrane to the nucleus (By similarity).</text>
</comment>
<comment type="subcellular location">
    <subcellularLocation>
        <location evidence="1">Golgi apparatus membrane</location>
        <topology evidence="1">Peripheral membrane protein</topology>
    </subcellularLocation>
    <subcellularLocation>
        <location evidence="1">Cell membrane</location>
        <topology evidence="1">Peripheral membrane protein</topology>
    </subcellularLocation>
    <subcellularLocation>
        <location evidence="3">Membrane</location>
        <location evidence="3">Caveola</location>
        <topology evidence="1">Peripheral membrane protein</topology>
    </subcellularLocation>
    <subcellularLocation>
        <location evidence="4">Membrane raft</location>
    </subcellularLocation>
    <text evidence="1">Colocalized with DPP4 in membrane rafts. Potential hairpin-like structure in the membrane. Membrane protein of caveolae (By similarity).</text>
</comment>
<comment type="PTM">
    <text evidence="4">Phosphorylated at Tyr-14 by ABL1 in response to oxidative stress.</text>
</comment>
<comment type="PTM">
    <text evidence="4">Ubiquitinated. Undergo monoubiquitination and multi- and/or polyubiquitination. Monoubiquitination of N-terminal lysines promotes integration in a ternary complex with UBXN6 and VCP which promotes oligomeric CAV1 targeting to lysosomes for degradation. Ubiquitinated by ZNRF1; leading to degradation and modulation of the TLR4-mediated immune response.</text>
</comment>
<comment type="similarity">
    <text evidence="7">Belongs to the caveolin family.</text>
</comment>
<protein>
    <recommendedName>
        <fullName>Caveolin-1</fullName>
    </recommendedName>
</protein>
<organism>
    <name type="scientific">Microcebus murinus</name>
    <name type="common">Gray mouse lemur</name>
    <name type="synonym">Lemur murinus</name>
    <dbReference type="NCBI Taxonomy" id="30608"/>
    <lineage>
        <taxon>Eukaryota</taxon>
        <taxon>Metazoa</taxon>
        <taxon>Chordata</taxon>
        <taxon>Craniata</taxon>
        <taxon>Vertebrata</taxon>
        <taxon>Euteleostomi</taxon>
        <taxon>Mammalia</taxon>
        <taxon>Eutheria</taxon>
        <taxon>Euarchontoglires</taxon>
        <taxon>Primates</taxon>
        <taxon>Strepsirrhini</taxon>
        <taxon>Lemuriformes</taxon>
        <taxon>Cheirogaleidae</taxon>
        <taxon>Microcebus</taxon>
    </lineage>
</organism>
<sequence length="179" mass="20666">MSGGKYVDSEGHLYTVPIREQGNIYKPNNKAMADEVSEKQQVYDAHTKEIDLVNRDPKHLNDDVVKIDFEDVIAEPEGTHSFDGIWKASFTTFTVTKYWFYRLLSALFGIPMALIWGIYFAILSFLHIWAVVPCIKSFLIEIQCISRVYSIYVHTFCDPLFEAIGKVFSNIRINMQKEI</sequence>
<keyword id="KW-0007">Acetylation</keyword>
<keyword id="KW-1003">Cell membrane</keyword>
<keyword id="KW-0333">Golgi apparatus</keyword>
<keyword id="KW-1017">Isopeptide bond</keyword>
<keyword id="KW-0449">Lipoprotein</keyword>
<keyword id="KW-0472">Membrane</keyword>
<keyword id="KW-0564">Palmitate</keyword>
<keyword id="KW-0597">Phosphoprotein</keyword>
<keyword id="KW-1185">Reference proteome</keyword>
<keyword id="KW-0832">Ubl conjugation</keyword>
<name>CAV1_MICMU</name>
<accession>Q2QL90</accession>
<gene>
    <name type="primary">CAV1</name>
</gene>
<feature type="initiator methionine" description="Removed" evidence="4">
    <location>
        <position position="1"/>
    </location>
</feature>
<feature type="chain" id="PRO_0000226333" description="Caveolin-1">
    <location>
        <begin position="2"/>
        <end position="179"/>
    </location>
</feature>
<feature type="topological domain" description="Cytoplasmic" evidence="6">
    <location>
        <begin position="2"/>
        <end position="105"/>
    </location>
</feature>
<feature type="intramembrane region" description="Helical" evidence="6">
    <location>
        <begin position="106"/>
        <end position="126"/>
    </location>
</feature>
<feature type="topological domain" description="Cytoplasmic" evidence="6">
    <location>
        <begin position="127"/>
        <end position="179"/>
    </location>
</feature>
<feature type="region of interest" description="Required for homooligomerization" evidence="4">
    <location>
        <begin position="2"/>
        <end position="95"/>
    </location>
</feature>
<feature type="region of interest" description="Interaction with CAVIN3" evidence="4">
    <location>
        <begin position="83"/>
        <end position="95"/>
    </location>
</feature>
<feature type="region of interest" description="Interacts with SPRY1, SPRY2, SPRY3 and SPRY4" evidence="3">
    <location>
        <begin position="132"/>
        <end position="143"/>
    </location>
</feature>
<feature type="region of interest" description="Interacts with SPRY1, SPRY2, and SPRY4" evidence="3">
    <location>
        <begin position="150"/>
        <end position="161"/>
    </location>
</feature>
<feature type="region of interest" description="Interacts with SPRY1, SPRY2, SPRY3 and SPRY4" evidence="3">
    <location>
        <begin position="168"/>
        <end position="179"/>
    </location>
</feature>
<feature type="modified residue" description="N-acetylserine" evidence="4">
    <location>
        <position position="2"/>
    </location>
</feature>
<feature type="modified residue" description="Phosphoserine" evidence="2">
    <location>
        <position position="2"/>
    </location>
</feature>
<feature type="modified residue" description="N6-acetyllysine; alternate" evidence="4">
    <location>
        <position position="5"/>
    </location>
</feature>
<feature type="modified residue" description="Phosphotyrosine" evidence="4">
    <location>
        <position position="6"/>
    </location>
</feature>
<feature type="modified residue" description="Phosphoserine" evidence="3">
    <location>
        <position position="9"/>
    </location>
</feature>
<feature type="modified residue" description="Phosphotyrosine; by ABL1" evidence="3">
    <location>
        <position position="14"/>
    </location>
</feature>
<feature type="modified residue" description="Phosphotyrosine" evidence="4">
    <location>
        <position position="25"/>
    </location>
</feature>
<feature type="modified residue" description="Phosphoserine" evidence="4">
    <location>
        <position position="37"/>
    </location>
</feature>
<feature type="lipid moiety-binding region" description="S-palmitoyl cysteine" evidence="1">
    <location>
        <position position="134"/>
    </location>
</feature>
<feature type="lipid moiety-binding region" description="S-palmitoyl cysteine" evidence="1">
    <location>
        <position position="144"/>
    </location>
</feature>
<feature type="lipid moiety-binding region" description="S-palmitoyl cysteine" evidence="1">
    <location>
        <position position="157"/>
    </location>
</feature>
<feature type="cross-link" description="Glycyl lysine isopeptide (Lys-Gly) (interchain with G-Cter in ubiquitin); alternate" evidence="4">
    <location>
        <position position="5"/>
    </location>
</feature>
<feature type="cross-link" description="Glycyl lysine isopeptide (Lys-Gly) (interchain with G-Cter in ubiquitin)" evidence="4">
    <location>
        <position position="26"/>
    </location>
</feature>
<feature type="cross-link" description="Glycyl lysine isopeptide (Lys-Gly) (interchain with G-Cter in ubiquitin)" evidence="4">
    <location>
        <position position="30"/>
    </location>
</feature>
<feature type="cross-link" description="Glycyl lysine isopeptide (Lys-Gly) (interchain with G-Cter in ubiquitin)" evidence="4">
    <location>
        <position position="39"/>
    </location>
</feature>
<feature type="cross-link" description="Glycyl lysine isopeptide (Lys-Gly) (interchain with G-Cter in ubiquitin)" evidence="4">
    <location>
        <position position="48"/>
    </location>
</feature>
<feature type="cross-link" description="Glycyl lysine isopeptide (Lys-Gly) (interchain with G-Cter in ubiquitin)" evidence="4">
    <location>
        <position position="58"/>
    </location>
</feature>
<reference key="1">
    <citation type="submission" date="2005-11" db="EMBL/GenBank/DDBJ databases">
        <title>NISC comparative sequencing initiative.</title>
        <authorList>
            <person name="Antonellis A."/>
            <person name="Ayele K."/>
            <person name="Benjamin B."/>
            <person name="Blakesley R.W."/>
            <person name="Boakye A."/>
            <person name="Bouffard G.G."/>
            <person name="Brinkley C."/>
            <person name="Brooks S."/>
            <person name="Chu G."/>
            <person name="Coleman H."/>
            <person name="Engle J."/>
            <person name="Gestole M."/>
            <person name="Greene A."/>
            <person name="Guan X."/>
            <person name="Gupta J."/>
            <person name="Haghighi P."/>
            <person name="Han J."/>
            <person name="Hansen N."/>
            <person name="Ho S.-L."/>
            <person name="Hu P."/>
            <person name="Hunter G."/>
            <person name="Hurle B."/>
            <person name="Idol J.R."/>
            <person name="Kwong P."/>
            <person name="Laric P."/>
            <person name="Larson S."/>
            <person name="Lee-Lin S.-Q."/>
            <person name="Legaspi R."/>
            <person name="Madden M."/>
            <person name="Maduro Q.L."/>
            <person name="Maduro V.B."/>
            <person name="Margulies E.H."/>
            <person name="Masiello C."/>
            <person name="Maskeri B."/>
            <person name="McDowell J."/>
            <person name="Mojidi H.A."/>
            <person name="Mullikin J.C."/>
            <person name="Oestreicher J.S."/>
            <person name="Park M."/>
            <person name="Portnoy M.E."/>
            <person name="Prasad A."/>
            <person name="Puri O."/>
            <person name="Reddix-Dugue N."/>
            <person name="Schandler K."/>
            <person name="Schueler M.G."/>
            <person name="Sison C."/>
            <person name="Stantripop S."/>
            <person name="Stephen E."/>
            <person name="Taye A."/>
            <person name="Thomas J.W."/>
            <person name="Thomas P.J."/>
            <person name="Tsipouri V."/>
            <person name="Ung L."/>
            <person name="Vogt J.L."/>
            <person name="Wetherby K.D."/>
            <person name="Young A."/>
            <person name="Green E.D."/>
        </authorList>
    </citation>
    <scope>NUCLEOTIDE SEQUENCE [LARGE SCALE GENOMIC DNA]</scope>
</reference>
<dbReference type="EMBL" id="DP000022">
    <property type="protein sequence ID" value="ABB89819.1"/>
    <property type="molecule type" value="Genomic_DNA"/>
</dbReference>
<dbReference type="RefSeq" id="XP_012616553.1">
    <property type="nucleotide sequence ID" value="XM_012761099.1"/>
</dbReference>
<dbReference type="SMR" id="Q2QL90"/>
<dbReference type="Ensembl" id="ENSMICT00000050192.2">
    <property type="protein sequence ID" value="ENSMICP00000031777.1"/>
    <property type="gene ID" value="ENSMICG00000026847.2"/>
</dbReference>
<dbReference type="GeneID" id="105869367"/>
<dbReference type="KEGG" id="mmur:105869367"/>
<dbReference type="CTD" id="857"/>
<dbReference type="GeneTree" id="ENSGT00950000183006"/>
<dbReference type="OrthoDB" id="5917823at2759"/>
<dbReference type="Proteomes" id="UP000694394">
    <property type="component" value="Chromosome 11"/>
</dbReference>
<dbReference type="Bgee" id="ENSMICG00000026847">
    <property type="expression patterns" value="Expressed in lung and 7 other cell types or tissues"/>
</dbReference>
<dbReference type="GO" id="GO:0002080">
    <property type="term" value="C:acrosomal membrane"/>
    <property type="evidence" value="ECO:0007669"/>
    <property type="project" value="Ensembl"/>
</dbReference>
<dbReference type="GO" id="GO:0005901">
    <property type="term" value="C:caveola"/>
    <property type="evidence" value="ECO:0000250"/>
    <property type="project" value="UniProtKB"/>
</dbReference>
<dbReference type="GO" id="GO:0002095">
    <property type="term" value="C:caveolar macromolecular signaling complex"/>
    <property type="evidence" value="ECO:0007669"/>
    <property type="project" value="Ensembl"/>
</dbReference>
<dbReference type="GO" id="GO:0005938">
    <property type="term" value="C:cell cortex"/>
    <property type="evidence" value="ECO:0007669"/>
    <property type="project" value="Ensembl"/>
</dbReference>
<dbReference type="GO" id="GO:0005929">
    <property type="term" value="C:cilium"/>
    <property type="evidence" value="ECO:0007669"/>
    <property type="project" value="Ensembl"/>
</dbReference>
<dbReference type="GO" id="GO:0005783">
    <property type="term" value="C:endoplasmic reticulum"/>
    <property type="evidence" value="ECO:0007669"/>
    <property type="project" value="Ensembl"/>
</dbReference>
<dbReference type="GO" id="GO:0005768">
    <property type="term" value="C:endosome"/>
    <property type="evidence" value="ECO:0000250"/>
    <property type="project" value="UniProtKB"/>
</dbReference>
<dbReference type="GO" id="GO:0005925">
    <property type="term" value="C:focal adhesion"/>
    <property type="evidence" value="ECO:0007669"/>
    <property type="project" value="Ensembl"/>
</dbReference>
<dbReference type="GO" id="GO:0000139">
    <property type="term" value="C:Golgi membrane"/>
    <property type="evidence" value="ECO:0007669"/>
    <property type="project" value="UniProtKB-SubCell"/>
</dbReference>
<dbReference type="GO" id="GO:0045121">
    <property type="term" value="C:membrane raft"/>
    <property type="evidence" value="ECO:0000250"/>
    <property type="project" value="UniProtKB"/>
</dbReference>
<dbReference type="GO" id="GO:0048471">
    <property type="term" value="C:perinuclear region of cytoplasm"/>
    <property type="evidence" value="ECO:0007669"/>
    <property type="project" value="Ensembl"/>
</dbReference>
<dbReference type="GO" id="GO:0042383">
    <property type="term" value="C:sarcolemma"/>
    <property type="evidence" value="ECO:0007669"/>
    <property type="project" value="TreeGrafter"/>
</dbReference>
<dbReference type="GO" id="GO:0051117">
    <property type="term" value="F:ATPase binding"/>
    <property type="evidence" value="ECO:0007669"/>
    <property type="project" value="Ensembl"/>
</dbReference>
<dbReference type="GO" id="GO:0042802">
    <property type="term" value="F:identical protein binding"/>
    <property type="evidence" value="ECO:0007669"/>
    <property type="project" value="Ensembl"/>
</dbReference>
<dbReference type="GO" id="GO:0070320">
    <property type="term" value="F:inward rectifier potassium channel inhibitor activity"/>
    <property type="evidence" value="ECO:0007669"/>
    <property type="project" value="Ensembl"/>
</dbReference>
<dbReference type="GO" id="GO:0050998">
    <property type="term" value="F:nitric-oxide synthase binding"/>
    <property type="evidence" value="ECO:0007669"/>
    <property type="project" value="Ensembl"/>
</dbReference>
<dbReference type="GO" id="GO:0008142">
    <property type="term" value="F:oxysterol binding"/>
    <property type="evidence" value="ECO:0000250"/>
    <property type="project" value="UniProtKB"/>
</dbReference>
<dbReference type="GO" id="GO:0016504">
    <property type="term" value="F:peptidase activator activity"/>
    <property type="evidence" value="ECO:0007669"/>
    <property type="project" value="Ensembl"/>
</dbReference>
<dbReference type="GO" id="GO:0046982">
    <property type="term" value="F:protein heterodimerization activity"/>
    <property type="evidence" value="ECO:0007669"/>
    <property type="project" value="Ensembl"/>
</dbReference>
<dbReference type="GO" id="GO:0019901">
    <property type="term" value="F:protein kinase binding"/>
    <property type="evidence" value="ECO:0007669"/>
    <property type="project" value="Ensembl"/>
</dbReference>
<dbReference type="GO" id="GO:0030292">
    <property type="term" value="F:protein tyrosine kinase inhibitor activity"/>
    <property type="evidence" value="ECO:0007669"/>
    <property type="project" value="Ensembl"/>
</dbReference>
<dbReference type="GO" id="GO:0044877">
    <property type="term" value="F:protein-containing complex binding"/>
    <property type="evidence" value="ECO:0007669"/>
    <property type="project" value="Ensembl"/>
</dbReference>
<dbReference type="GO" id="GO:0030674">
    <property type="term" value="F:protein-macromolecule adaptor activity"/>
    <property type="evidence" value="ECO:0007669"/>
    <property type="project" value="Ensembl"/>
</dbReference>
<dbReference type="GO" id="GO:0005102">
    <property type="term" value="F:signaling receptor binding"/>
    <property type="evidence" value="ECO:0007669"/>
    <property type="project" value="Ensembl"/>
</dbReference>
<dbReference type="GO" id="GO:0031267">
    <property type="term" value="F:small GTPase binding"/>
    <property type="evidence" value="ECO:0007669"/>
    <property type="project" value="Ensembl"/>
</dbReference>
<dbReference type="GO" id="GO:0044325">
    <property type="term" value="F:transmembrane transporter binding"/>
    <property type="evidence" value="ECO:0007669"/>
    <property type="project" value="Ensembl"/>
</dbReference>
<dbReference type="GO" id="GO:0001525">
    <property type="term" value="P:angiogenesis"/>
    <property type="evidence" value="ECO:0007669"/>
    <property type="project" value="Ensembl"/>
</dbReference>
<dbReference type="GO" id="GO:0038166">
    <property type="term" value="P:angiotensin-activated signaling pathway"/>
    <property type="evidence" value="ECO:0007669"/>
    <property type="project" value="Ensembl"/>
</dbReference>
<dbReference type="GO" id="GO:0097190">
    <property type="term" value="P:apoptotic signaling pathway"/>
    <property type="evidence" value="ECO:0007669"/>
    <property type="project" value="Ensembl"/>
</dbReference>
<dbReference type="GO" id="GO:0071711">
    <property type="term" value="P:basement membrane organization"/>
    <property type="evidence" value="ECO:0007669"/>
    <property type="project" value="Ensembl"/>
</dbReference>
<dbReference type="GO" id="GO:0006816">
    <property type="term" value="P:calcium ion transport"/>
    <property type="evidence" value="ECO:0007669"/>
    <property type="project" value="Ensembl"/>
</dbReference>
<dbReference type="GO" id="GO:0060070">
    <property type="term" value="P:canonical Wnt signaling pathway"/>
    <property type="evidence" value="ECO:0007669"/>
    <property type="project" value="Ensembl"/>
</dbReference>
<dbReference type="GO" id="GO:0070836">
    <property type="term" value="P:caveola assembly"/>
    <property type="evidence" value="ECO:0007669"/>
    <property type="project" value="Ensembl"/>
</dbReference>
<dbReference type="GO" id="GO:0072584">
    <property type="term" value="P:caveolin-mediated endocytosis"/>
    <property type="evidence" value="ECO:0007669"/>
    <property type="project" value="Ensembl"/>
</dbReference>
<dbReference type="GO" id="GO:0071360">
    <property type="term" value="P:cellular response to exogenous dsRNA"/>
    <property type="evidence" value="ECO:0007669"/>
    <property type="project" value="Ensembl"/>
</dbReference>
<dbReference type="GO" id="GO:0071455">
    <property type="term" value="P:cellular response to hyperoxia"/>
    <property type="evidence" value="ECO:0007669"/>
    <property type="project" value="Ensembl"/>
</dbReference>
<dbReference type="GO" id="GO:0071218">
    <property type="term" value="P:cellular response to misfolded protein"/>
    <property type="evidence" value="ECO:0007669"/>
    <property type="project" value="Ensembl"/>
</dbReference>
<dbReference type="GO" id="GO:0071560">
    <property type="term" value="P:cellular response to transforming growth factor beta stimulus"/>
    <property type="evidence" value="ECO:0007669"/>
    <property type="project" value="Ensembl"/>
</dbReference>
<dbReference type="GO" id="GO:0042632">
    <property type="term" value="P:cholesterol homeostasis"/>
    <property type="evidence" value="ECO:0007669"/>
    <property type="project" value="Ensembl"/>
</dbReference>
<dbReference type="GO" id="GO:0019221">
    <property type="term" value="P:cytokine-mediated signaling pathway"/>
    <property type="evidence" value="ECO:0007669"/>
    <property type="project" value="Ensembl"/>
</dbReference>
<dbReference type="GO" id="GO:0001935">
    <property type="term" value="P:endothelial cell proliferation"/>
    <property type="evidence" value="ECO:0007669"/>
    <property type="project" value="Ensembl"/>
</dbReference>
<dbReference type="GO" id="GO:0051649">
    <property type="term" value="P:establishment of localization in cell"/>
    <property type="evidence" value="ECO:0007669"/>
    <property type="project" value="Ensembl"/>
</dbReference>
<dbReference type="GO" id="GO:0048144">
    <property type="term" value="P:fibroblast proliferation"/>
    <property type="evidence" value="ECO:0007669"/>
    <property type="project" value="Ensembl"/>
</dbReference>
<dbReference type="GO" id="GO:0002067">
    <property type="term" value="P:glandular epithelial cell differentiation"/>
    <property type="evidence" value="ECO:0007669"/>
    <property type="project" value="Ensembl"/>
</dbReference>
<dbReference type="GO" id="GO:0038016">
    <property type="term" value="P:insulin receptor internalization"/>
    <property type="evidence" value="ECO:0007669"/>
    <property type="project" value="Ensembl"/>
</dbReference>
<dbReference type="GO" id="GO:0033484">
    <property type="term" value="P:intracellular nitric oxide homeostasis"/>
    <property type="evidence" value="ECO:0007669"/>
    <property type="project" value="Ensembl"/>
</dbReference>
<dbReference type="GO" id="GO:0007595">
    <property type="term" value="P:lactation"/>
    <property type="evidence" value="ECO:0007669"/>
    <property type="project" value="Ensembl"/>
</dbReference>
<dbReference type="GO" id="GO:0019915">
    <property type="term" value="P:lipid storage"/>
    <property type="evidence" value="ECO:0007669"/>
    <property type="project" value="Ensembl"/>
</dbReference>
<dbReference type="GO" id="GO:0060056">
    <property type="term" value="P:mammary gland involution"/>
    <property type="evidence" value="ECO:0007669"/>
    <property type="project" value="Ensembl"/>
</dbReference>
<dbReference type="GO" id="GO:0000165">
    <property type="term" value="P:MAPK cascade"/>
    <property type="evidence" value="ECO:0007669"/>
    <property type="project" value="Ensembl"/>
</dbReference>
<dbReference type="GO" id="GO:0051899">
    <property type="term" value="P:membrane depolarization"/>
    <property type="evidence" value="ECO:0007669"/>
    <property type="project" value="Ensembl"/>
</dbReference>
<dbReference type="GO" id="GO:0046716">
    <property type="term" value="P:muscle cell cellular homeostasis"/>
    <property type="evidence" value="ECO:0007669"/>
    <property type="project" value="Ensembl"/>
</dbReference>
<dbReference type="GO" id="GO:2000811">
    <property type="term" value="P:negative regulation of anoikis"/>
    <property type="evidence" value="ECO:0007669"/>
    <property type="project" value="Ensembl"/>
</dbReference>
<dbReference type="GO" id="GO:0090090">
    <property type="term" value="P:negative regulation of canonical Wnt signaling pathway"/>
    <property type="evidence" value="ECO:0007669"/>
    <property type="project" value="Ensembl"/>
</dbReference>
<dbReference type="GO" id="GO:0001960">
    <property type="term" value="P:negative regulation of cytokine-mediated signaling pathway"/>
    <property type="evidence" value="ECO:0007669"/>
    <property type="project" value="Ensembl"/>
</dbReference>
<dbReference type="GO" id="GO:0001937">
    <property type="term" value="P:negative regulation of endothelial cell proliferation"/>
    <property type="evidence" value="ECO:0007669"/>
    <property type="project" value="Ensembl"/>
</dbReference>
<dbReference type="GO" id="GO:0030857">
    <property type="term" value="P:negative regulation of epithelial cell differentiation"/>
    <property type="evidence" value="ECO:0007669"/>
    <property type="project" value="Ensembl"/>
</dbReference>
<dbReference type="GO" id="GO:0048147">
    <property type="term" value="P:negative regulation of fibroblast proliferation"/>
    <property type="evidence" value="ECO:0007669"/>
    <property type="project" value="Ensembl"/>
</dbReference>
<dbReference type="GO" id="GO:0043409">
    <property type="term" value="P:negative regulation of MAPK cascade"/>
    <property type="evidence" value="ECO:0007669"/>
    <property type="project" value="Ensembl"/>
</dbReference>
<dbReference type="GO" id="GO:0060546">
    <property type="term" value="P:negative regulation of necroptotic process"/>
    <property type="evidence" value="ECO:0007669"/>
    <property type="project" value="Ensembl"/>
</dbReference>
<dbReference type="GO" id="GO:0045019">
    <property type="term" value="P:negative regulation of nitric oxide biosynthetic process"/>
    <property type="evidence" value="ECO:0007669"/>
    <property type="project" value="Ensembl"/>
</dbReference>
<dbReference type="GO" id="GO:0048550">
    <property type="term" value="P:negative regulation of pinocytosis"/>
    <property type="evidence" value="ECO:0007669"/>
    <property type="project" value="Ensembl"/>
</dbReference>
<dbReference type="GO" id="GO:1901380">
    <property type="term" value="P:negative regulation of potassium ion transmembrane transport"/>
    <property type="evidence" value="ECO:0007669"/>
    <property type="project" value="Ensembl"/>
</dbReference>
<dbReference type="GO" id="GO:0031397">
    <property type="term" value="P:negative regulation of protein ubiquitination"/>
    <property type="evidence" value="ECO:0007669"/>
    <property type="project" value="Ensembl"/>
</dbReference>
<dbReference type="GO" id="GO:0046426">
    <property type="term" value="P:negative regulation of receptor signaling pathway via JAK-STAT"/>
    <property type="evidence" value="ECO:0007669"/>
    <property type="project" value="Ensembl"/>
</dbReference>
<dbReference type="GO" id="GO:0000122">
    <property type="term" value="P:negative regulation of transcription by RNA polymerase II"/>
    <property type="evidence" value="ECO:0007669"/>
    <property type="project" value="Ensembl"/>
</dbReference>
<dbReference type="GO" id="GO:0006809">
    <property type="term" value="P:nitric oxide biosynthetic process"/>
    <property type="evidence" value="ECO:0007669"/>
    <property type="project" value="Ensembl"/>
</dbReference>
<dbReference type="GO" id="GO:0010524">
    <property type="term" value="P:positive regulation of calcium ion transport into cytosol"/>
    <property type="evidence" value="ECO:0007669"/>
    <property type="project" value="Ensembl"/>
</dbReference>
<dbReference type="GO" id="GO:0043123">
    <property type="term" value="P:positive regulation of canonical NF-kappaB signal transduction"/>
    <property type="evidence" value="ECO:0007669"/>
    <property type="project" value="Ensembl"/>
</dbReference>
<dbReference type="GO" id="GO:0060355">
    <property type="term" value="P:positive regulation of cell adhesion molecule production"/>
    <property type="evidence" value="ECO:0007669"/>
    <property type="project" value="Ensembl"/>
</dbReference>
<dbReference type="GO" id="GO:0030335">
    <property type="term" value="P:positive regulation of cell migration"/>
    <property type="evidence" value="ECO:0007669"/>
    <property type="project" value="Ensembl"/>
</dbReference>
<dbReference type="GO" id="GO:0010875">
    <property type="term" value="P:positive regulation of cholesterol efflux"/>
    <property type="evidence" value="ECO:0007669"/>
    <property type="project" value="Ensembl"/>
</dbReference>
<dbReference type="GO" id="GO:0120162">
    <property type="term" value="P:positive regulation of cold-induced thermogenesis"/>
    <property type="evidence" value="ECO:0007669"/>
    <property type="project" value="Ensembl"/>
</dbReference>
<dbReference type="GO" id="GO:1904294">
    <property type="term" value="P:positive regulation of ERAD pathway"/>
    <property type="evidence" value="ECO:0007669"/>
    <property type="project" value="Ensembl"/>
</dbReference>
<dbReference type="GO" id="GO:2001238">
    <property type="term" value="P:positive regulation of extrinsic apoptotic signaling pathway"/>
    <property type="evidence" value="ECO:0007669"/>
    <property type="project" value="Ensembl"/>
</dbReference>
<dbReference type="GO" id="GO:1903598">
    <property type="term" value="P:positive regulation of gap junction assembly"/>
    <property type="evidence" value="ECO:0007669"/>
    <property type="project" value="Ensembl"/>
</dbReference>
<dbReference type="GO" id="GO:0010628">
    <property type="term" value="P:positive regulation of gene expression"/>
    <property type="evidence" value="ECO:0007669"/>
    <property type="project" value="Ensembl"/>
</dbReference>
<dbReference type="GO" id="GO:2001244">
    <property type="term" value="P:positive regulation of intrinsic apoptotic signaling pathway"/>
    <property type="evidence" value="ECO:0007669"/>
    <property type="project" value="Ensembl"/>
</dbReference>
<dbReference type="GO" id="GO:0031398">
    <property type="term" value="P:positive regulation of protein ubiquitination"/>
    <property type="evidence" value="ECO:0007669"/>
    <property type="project" value="Ensembl"/>
</dbReference>
<dbReference type="GO" id="GO:0034141">
    <property type="term" value="P:positive regulation of toll-like receptor 3 signaling pathway"/>
    <property type="evidence" value="ECO:0007669"/>
    <property type="project" value="Ensembl"/>
</dbReference>
<dbReference type="GO" id="GO:0045907">
    <property type="term" value="P:positive regulation of vasoconstriction"/>
    <property type="evidence" value="ECO:0007669"/>
    <property type="project" value="Ensembl"/>
</dbReference>
<dbReference type="GO" id="GO:0010608">
    <property type="term" value="P:post-transcriptional regulation of gene expression"/>
    <property type="evidence" value="ECO:0007669"/>
    <property type="project" value="Ensembl"/>
</dbReference>
<dbReference type="GO" id="GO:0015031">
    <property type="term" value="P:protein transport"/>
    <property type="evidence" value="ECO:0007669"/>
    <property type="project" value="Ensembl"/>
</dbReference>
<dbReference type="GO" id="GO:0031623">
    <property type="term" value="P:receptor internalization"/>
    <property type="evidence" value="ECO:0000250"/>
    <property type="project" value="UniProtKB"/>
</dbReference>
<dbReference type="GO" id="GO:0019065">
    <property type="term" value="P:receptor-mediated endocytosis of virus by host cell"/>
    <property type="evidence" value="ECO:0007669"/>
    <property type="project" value="Ensembl"/>
</dbReference>
<dbReference type="GO" id="GO:0030193">
    <property type="term" value="P:regulation of blood coagulation"/>
    <property type="evidence" value="ECO:0007669"/>
    <property type="project" value="Ensembl"/>
</dbReference>
<dbReference type="GO" id="GO:1901844">
    <property type="term" value="P:regulation of cell communication by electrical coupling involved in cardiac conduction"/>
    <property type="evidence" value="ECO:0007669"/>
    <property type="project" value="Ensembl"/>
</dbReference>
<dbReference type="GO" id="GO:0051480">
    <property type="term" value="P:regulation of cytosolic calcium ion concentration"/>
    <property type="evidence" value="ECO:0007669"/>
    <property type="project" value="Ensembl"/>
</dbReference>
<dbReference type="GO" id="GO:2000535">
    <property type="term" value="P:regulation of entry of bacterium into host cell"/>
    <property type="evidence" value="ECO:0007669"/>
    <property type="project" value="Ensembl"/>
</dbReference>
<dbReference type="GO" id="GO:0019217">
    <property type="term" value="P:regulation of fatty acid metabolic process"/>
    <property type="evidence" value="ECO:0007669"/>
    <property type="project" value="Ensembl"/>
</dbReference>
<dbReference type="GO" id="GO:0086091">
    <property type="term" value="P:regulation of heart rate by cardiac conduction"/>
    <property type="evidence" value="ECO:0007669"/>
    <property type="project" value="Ensembl"/>
</dbReference>
<dbReference type="GO" id="GO:0098903">
    <property type="term" value="P:regulation of membrane repolarization during action potential"/>
    <property type="evidence" value="ECO:0007669"/>
    <property type="project" value="Ensembl"/>
</dbReference>
<dbReference type="GO" id="GO:1900027">
    <property type="term" value="P:regulation of ruffle assembly"/>
    <property type="evidence" value="ECO:0007669"/>
    <property type="project" value="Ensembl"/>
</dbReference>
<dbReference type="GO" id="GO:0006940">
    <property type="term" value="P:regulation of smooth muscle contraction"/>
    <property type="evidence" value="ECO:0007669"/>
    <property type="project" value="Ensembl"/>
</dbReference>
<dbReference type="GO" id="GO:0003057">
    <property type="term" value="P:regulation of the force of heart contraction by chemical signal"/>
    <property type="evidence" value="ECO:0007669"/>
    <property type="project" value="Ensembl"/>
</dbReference>
<dbReference type="GO" id="GO:0098911">
    <property type="term" value="P:regulation of ventricular cardiac muscle cell action potential"/>
    <property type="evidence" value="ECO:0007669"/>
    <property type="project" value="Ensembl"/>
</dbReference>
<dbReference type="GO" id="GO:0009617">
    <property type="term" value="P:response to bacterium"/>
    <property type="evidence" value="ECO:0007669"/>
    <property type="project" value="Ensembl"/>
</dbReference>
<dbReference type="GO" id="GO:0051592">
    <property type="term" value="P:response to calcium ion"/>
    <property type="evidence" value="ECO:0007669"/>
    <property type="project" value="Ensembl"/>
</dbReference>
<dbReference type="GO" id="GO:0043627">
    <property type="term" value="P:response to estrogen"/>
    <property type="evidence" value="ECO:0007669"/>
    <property type="project" value="Ensembl"/>
</dbReference>
<dbReference type="GO" id="GO:0001666">
    <property type="term" value="P:response to hypoxia"/>
    <property type="evidence" value="ECO:0007669"/>
    <property type="project" value="Ensembl"/>
</dbReference>
<dbReference type="GO" id="GO:0002931">
    <property type="term" value="P:response to ischemia"/>
    <property type="evidence" value="ECO:0007669"/>
    <property type="project" value="Ensembl"/>
</dbReference>
<dbReference type="GO" id="GO:0032570">
    <property type="term" value="P:response to progesterone"/>
    <property type="evidence" value="ECO:0007669"/>
    <property type="project" value="Ensembl"/>
</dbReference>
<dbReference type="GO" id="GO:0007519">
    <property type="term" value="P:skeletal muscle tissue development"/>
    <property type="evidence" value="ECO:0007669"/>
    <property type="project" value="Ensembl"/>
</dbReference>
<dbReference type="GO" id="GO:0031295">
    <property type="term" value="P:T cell costimulation"/>
    <property type="evidence" value="ECO:0000250"/>
    <property type="project" value="UniProtKB"/>
</dbReference>
<dbReference type="GO" id="GO:0006641">
    <property type="term" value="P:triglyceride metabolic process"/>
    <property type="evidence" value="ECO:0007669"/>
    <property type="project" value="Ensembl"/>
</dbReference>
<dbReference type="GO" id="GO:0001570">
    <property type="term" value="P:vasculogenesis"/>
    <property type="evidence" value="ECO:0007669"/>
    <property type="project" value="Ensembl"/>
</dbReference>
<dbReference type="GO" id="GO:0042310">
    <property type="term" value="P:vasoconstriction"/>
    <property type="evidence" value="ECO:0007669"/>
    <property type="project" value="Ensembl"/>
</dbReference>
<dbReference type="InterPro" id="IPR001612">
    <property type="entry name" value="Caveolin"/>
</dbReference>
<dbReference type="InterPro" id="IPR018361">
    <property type="entry name" value="Caveolin_CS"/>
</dbReference>
<dbReference type="PANTHER" id="PTHR10844">
    <property type="entry name" value="CAVEOLIN"/>
    <property type="match status" value="1"/>
</dbReference>
<dbReference type="PANTHER" id="PTHR10844:SF18">
    <property type="entry name" value="CAVEOLIN-1"/>
    <property type="match status" value="1"/>
</dbReference>
<dbReference type="Pfam" id="PF01146">
    <property type="entry name" value="Caveolin"/>
    <property type="match status" value="1"/>
</dbReference>
<dbReference type="PROSITE" id="PS01210">
    <property type="entry name" value="CAVEOLIN"/>
    <property type="match status" value="1"/>
</dbReference>
<proteinExistence type="inferred from homology"/>
<evidence type="ECO:0000250" key="1"/>
<evidence type="ECO:0000250" key="2">
    <source>
        <dbReference type="UniProtKB" id="P41350"/>
    </source>
</evidence>
<evidence type="ECO:0000250" key="3">
    <source>
        <dbReference type="UniProtKB" id="P49817"/>
    </source>
</evidence>
<evidence type="ECO:0000250" key="4">
    <source>
        <dbReference type="UniProtKB" id="Q03135"/>
    </source>
</evidence>
<evidence type="ECO:0000250" key="5">
    <source>
        <dbReference type="UniProtKB" id="Q2IBA5"/>
    </source>
</evidence>
<evidence type="ECO:0000255" key="6"/>
<evidence type="ECO:0000305" key="7"/>